<organism>
    <name type="scientific">Micrococcus luteus (strain ATCC 4698 / DSM 20030 / JCM 1464 / CCM 169 / CCUG 5858 / IAM 1056 / NBRC 3333 / NCIMB 9278 / NCTC 2665 / VKM Ac-2230)</name>
    <name type="common">Micrococcus lysodeikticus</name>
    <dbReference type="NCBI Taxonomy" id="465515"/>
    <lineage>
        <taxon>Bacteria</taxon>
        <taxon>Bacillati</taxon>
        <taxon>Actinomycetota</taxon>
        <taxon>Actinomycetes</taxon>
        <taxon>Micrococcales</taxon>
        <taxon>Micrococcaceae</taxon>
        <taxon>Micrococcus</taxon>
    </lineage>
</organism>
<reference key="1">
    <citation type="journal article" date="2010" name="J. Bacteriol.">
        <title>Genome sequence of the Fleming strain of Micrococcus luteus, a simple free-living actinobacterium.</title>
        <authorList>
            <person name="Young M."/>
            <person name="Artsatbanov V."/>
            <person name="Beller H.R."/>
            <person name="Chandra G."/>
            <person name="Chater K.F."/>
            <person name="Dover L.G."/>
            <person name="Goh E.B."/>
            <person name="Kahan T."/>
            <person name="Kaprelyants A.S."/>
            <person name="Kyrpides N."/>
            <person name="Lapidus A."/>
            <person name="Lowry S.R."/>
            <person name="Lykidis A."/>
            <person name="Mahillon J."/>
            <person name="Markowitz V."/>
            <person name="Mavromatis K."/>
            <person name="Mukamolova G.V."/>
            <person name="Oren A."/>
            <person name="Rokem J.S."/>
            <person name="Smith M.C."/>
            <person name="Young D.I."/>
            <person name="Greenblatt C.L."/>
        </authorList>
    </citation>
    <scope>NUCLEOTIDE SEQUENCE [LARGE SCALE GENOMIC DNA]</scope>
    <source>
        <strain>ATCC 4698 / DSM 20030 / JCM 1464 / CCM 169 / CCUG 5858 / IAM 1056 / NBRC 3333 / NCIMB 9278 / NCTC 2665 / VKM Ac-2230</strain>
    </source>
</reference>
<comment type="function">
    <text evidence="1">Plays an important role in the de novo pathway of purine nucleotide biosynthesis. Catalyzes the first committed step in the biosynthesis of AMP from IMP.</text>
</comment>
<comment type="catalytic activity">
    <reaction evidence="1">
        <text>IMP + L-aspartate + GTP = N(6)-(1,2-dicarboxyethyl)-AMP + GDP + phosphate + 2 H(+)</text>
        <dbReference type="Rhea" id="RHEA:15753"/>
        <dbReference type="ChEBI" id="CHEBI:15378"/>
        <dbReference type="ChEBI" id="CHEBI:29991"/>
        <dbReference type="ChEBI" id="CHEBI:37565"/>
        <dbReference type="ChEBI" id="CHEBI:43474"/>
        <dbReference type="ChEBI" id="CHEBI:57567"/>
        <dbReference type="ChEBI" id="CHEBI:58053"/>
        <dbReference type="ChEBI" id="CHEBI:58189"/>
        <dbReference type="EC" id="6.3.4.4"/>
    </reaction>
</comment>
<comment type="cofactor">
    <cofactor evidence="1">
        <name>Mg(2+)</name>
        <dbReference type="ChEBI" id="CHEBI:18420"/>
    </cofactor>
    <text evidence="1">Binds 1 Mg(2+) ion per subunit.</text>
</comment>
<comment type="pathway">
    <text evidence="1">Purine metabolism; AMP biosynthesis via de novo pathway; AMP from IMP: step 1/2.</text>
</comment>
<comment type="subunit">
    <text evidence="1">Homodimer.</text>
</comment>
<comment type="subcellular location">
    <subcellularLocation>
        <location evidence="1">Cytoplasm</location>
    </subcellularLocation>
</comment>
<comment type="similarity">
    <text evidence="1">Belongs to the adenylosuccinate synthetase family.</text>
</comment>
<dbReference type="EC" id="6.3.4.4" evidence="1"/>
<dbReference type="EMBL" id="CP001628">
    <property type="protein sequence ID" value="ACS29781.1"/>
    <property type="molecule type" value="Genomic_DNA"/>
</dbReference>
<dbReference type="RefSeq" id="WP_010079585.1">
    <property type="nucleotide sequence ID" value="NC_012803.1"/>
</dbReference>
<dbReference type="SMR" id="C5C8H9"/>
<dbReference type="STRING" id="465515.Mlut_02210"/>
<dbReference type="EnsemblBacteria" id="ACS29781">
    <property type="protein sequence ID" value="ACS29781"/>
    <property type="gene ID" value="Mlut_02210"/>
</dbReference>
<dbReference type="GeneID" id="93344401"/>
<dbReference type="KEGG" id="mlu:Mlut_02210"/>
<dbReference type="PATRIC" id="fig|465515.4.peg.197"/>
<dbReference type="eggNOG" id="COG0104">
    <property type="taxonomic scope" value="Bacteria"/>
</dbReference>
<dbReference type="HOGENOM" id="CLU_029848_0_0_11"/>
<dbReference type="UniPathway" id="UPA00075">
    <property type="reaction ID" value="UER00335"/>
</dbReference>
<dbReference type="Proteomes" id="UP000000738">
    <property type="component" value="Chromosome"/>
</dbReference>
<dbReference type="GO" id="GO:0005737">
    <property type="term" value="C:cytoplasm"/>
    <property type="evidence" value="ECO:0007669"/>
    <property type="project" value="UniProtKB-SubCell"/>
</dbReference>
<dbReference type="GO" id="GO:0004019">
    <property type="term" value="F:adenylosuccinate synthase activity"/>
    <property type="evidence" value="ECO:0007669"/>
    <property type="project" value="UniProtKB-UniRule"/>
</dbReference>
<dbReference type="GO" id="GO:0005525">
    <property type="term" value="F:GTP binding"/>
    <property type="evidence" value="ECO:0007669"/>
    <property type="project" value="UniProtKB-UniRule"/>
</dbReference>
<dbReference type="GO" id="GO:0000287">
    <property type="term" value="F:magnesium ion binding"/>
    <property type="evidence" value="ECO:0007669"/>
    <property type="project" value="UniProtKB-UniRule"/>
</dbReference>
<dbReference type="GO" id="GO:0044208">
    <property type="term" value="P:'de novo' AMP biosynthetic process"/>
    <property type="evidence" value="ECO:0007669"/>
    <property type="project" value="UniProtKB-UniRule"/>
</dbReference>
<dbReference type="GO" id="GO:0046040">
    <property type="term" value="P:IMP metabolic process"/>
    <property type="evidence" value="ECO:0007669"/>
    <property type="project" value="TreeGrafter"/>
</dbReference>
<dbReference type="CDD" id="cd03108">
    <property type="entry name" value="AdSS"/>
    <property type="match status" value="1"/>
</dbReference>
<dbReference type="FunFam" id="1.10.300.10:FF:000001">
    <property type="entry name" value="Adenylosuccinate synthetase"/>
    <property type="match status" value="1"/>
</dbReference>
<dbReference type="FunFam" id="3.90.170.10:FF:000001">
    <property type="entry name" value="Adenylosuccinate synthetase"/>
    <property type="match status" value="1"/>
</dbReference>
<dbReference type="Gene3D" id="3.40.440.10">
    <property type="entry name" value="Adenylosuccinate Synthetase, subunit A, domain 1"/>
    <property type="match status" value="1"/>
</dbReference>
<dbReference type="Gene3D" id="1.10.300.10">
    <property type="entry name" value="Adenylosuccinate Synthetase, subunit A, domain 2"/>
    <property type="match status" value="1"/>
</dbReference>
<dbReference type="Gene3D" id="3.90.170.10">
    <property type="entry name" value="Adenylosuccinate Synthetase, subunit A, domain 3"/>
    <property type="match status" value="1"/>
</dbReference>
<dbReference type="HAMAP" id="MF_00011">
    <property type="entry name" value="Adenylosucc_synth"/>
    <property type="match status" value="1"/>
</dbReference>
<dbReference type="InterPro" id="IPR018220">
    <property type="entry name" value="Adenylosuccin_syn_GTP-bd"/>
</dbReference>
<dbReference type="InterPro" id="IPR033128">
    <property type="entry name" value="Adenylosuccin_syn_Lys_AS"/>
</dbReference>
<dbReference type="InterPro" id="IPR042109">
    <property type="entry name" value="Adenylosuccinate_synth_dom1"/>
</dbReference>
<dbReference type="InterPro" id="IPR042110">
    <property type="entry name" value="Adenylosuccinate_synth_dom2"/>
</dbReference>
<dbReference type="InterPro" id="IPR042111">
    <property type="entry name" value="Adenylosuccinate_synth_dom3"/>
</dbReference>
<dbReference type="InterPro" id="IPR001114">
    <property type="entry name" value="Adenylosuccinate_synthetase"/>
</dbReference>
<dbReference type="InterPro" id="IPR027417">
    <property type="entry name" value="P-loop_NTPase"/>
</dbReference>
<dbReference type="NCBIfam" id="NF002223">
    <property type="entry name" value="PRK01117.1"/>
    <property type="match status" value="1"/>
</dbReference>
<dbReference type="NCBIfam" id="TIGR00184">
    <property type="entry name" value="purA"/>
    <property type="match status" value="1"/>
</dbReference>
<dbReference type="PANTHER" id="PTHR11846">
    <property type="entry name" value="ADENYLOSUCCINATE SYNTHETASE"/>
    <property type="match status" value="1"/>
</dbReference>
<dbReference type="PANTHER" id="PTHR11846:SF0">
    <property type="entry name" value="ADENYLOSUCCINATE SYNTHETASE"/>
    <property type="match status" value="1"/>
</dbReference>
<dbReference type="Pfam" id="PF00709">
    <property type="entry name" value="Adenylsucc_synt"/>
    <property type="match status" value="1"/>
</dbReference>
<dbReference type="SMART" id="SM00788">
    <property type="entry name" value="Adenylsucc_synt"/>
    <property type="match status" value="1"/>
</dbReference>
<dbReference type="SUPFAM" id="SSF52540">
    <property type="entry name" value="P-loop containing nucleoside triphosphate hydrolases"/>
    <property type="match status" value="1"/>
</dbReference>
<dbReference type="PROSITE" id="PS01266">
    <property type="entry name" value="ADENYLOSUCCIN_SYN_1"/>
    <property type="match status" value="1"/>
</dbReference>
<dbReference type="PROSITE" id="PS00513">
    <property type="entry name" value="ADENYLOSUCCIN_SYN_2"/>
    <property type="match status" value="1"/>
</dbReference>
<protein>
    <recommendedName>
        <fullName evidence="1">Adenylosuccinate synthetase</fullName>
        <shortName evidence="1">AMPSase</shortName>
        <shortName evidence="1">AdSS</shortName>
        <ecNumber evidence="1">6.3.4.4</ecNumber>
    </recommendedName>
    <alternativeName>
        <fullName evidence="1">IMP--aspartate ligase</fullName>
    </alternativeName>
</protein>
<name>PURA_MICLC</name>
<gene>
    <name evidence="1" type="primary">purA</name>
    <name type="ordered locus">Mlut_02210</name>
</gene>
<proteinExistence type="inferred from homology"/>
<feature type="chain" id="PRO_1000201761" description="Adenylosuccinate synthetase">
    <location>
        <begin position="1"/>
        <end position="429"/>
    </location>
</feature>
<feature type="active site" description="Proton acceptor" evidence="1">
    <location>
        <position position="13"/>
    </location>
</feature>
<feature type="active site" description="Proton donor" evidence="1">
    <location>
        <position position="41"/>
    </location>
</feature>
<feature type="binding site" evidence="1">
    <location>
        <begin position="12"/>
        <end position="18"/>
    </location>
    <ligand>
        <name>GTP</name>
        <dbReference type="ChEBI" id="CHEBI:37565"/>
    </ligand>
</feature>
<feature type="binding site" description="in other chain" evidence="1">
    <location>
        <begin position="13"/>
        <end position="16"/>
    </location>
    <ligand>
        <name>IMP</name>
        <dbReference type="ChEBI" id="CHEBI:58053"/>
        <note>ligand shared between dimeric partners</note>
    </ligand>
</feature>
<feature type="binding site" evidence="1">
    <location>
        <position position="13"/>
    </location>
    <ligand>
        <name>Mg(2+)</name>
        <dbReference type="ChEBI" id="CHEBI:18420"/>
    </ligand>
</feature>
<feature type="binding site" description="in other chain" evidence="1">
    <location>
        <begin position="38"/>
        <end position="41"/>
    </location>
    <ligand>
        <name>IMP</name>
        <dbReference type="ChEBI" id="CHEBI:58053"/>
        <note>ligand shared between dimeric partners</note>
    </ligand>
</feature>
<feature type="binding site" evidence="1">
    <location>
        <begin position="40"/>
        <end position="42"/>
    </location>
    <ligand>
        <name>GTP</name>
        <dbReference type="ChEBI" id="CHEBI:37565"/>
    </ligand>
</feature>
<feature type="binding site" evidence="1">
    <location>
        <position position="40"/>
    </location>
    <ligand>
        <name>Mg(2+)</name>
        <dbReference type="ChEBI" id="CHEBI:18420"/>
    </ligand>
</feature>
<feature type="binding site" description="in other chain" evidence="1">
    <location>
        <position position="128"/>
    </location>
    <ligand>
        <name>IMP</name>
        <dbReference type="ChEBI" id="CHEBI:58053"/>
        <note>ligand shared between dimeric partners</note>
    </ligand>
</feature>
<feature type="binding site" evidence="1">
    <location>
        <position position="142"/>
    </location>
    <ligand>
        <name>IMP</name>
        <dbReference type="ChEBI" id="CHEBI:58053"/>
        <note>ligand shared between dimeric partners</note>
    </ligand>
</feature>
<feature type="binding site" description="in other chain" evidence="1">
    <location>
        <position position="223"/>
    </location>
    <ligand>
        <name>IMP</name>
        <dbReference type="ChEBI" id="CHEBI:58053"/>
        <note>ligand shared between dimeric partners</note>
    </ligand>
</feature>
<feature type="binding site" description="in other chain" evidence="1">
    <location>
        <position position="238"/>
    </location>
    <ligand>
        <name>IMP</name>
        <dbReference type="ChEBI" id="CHEBI:58053"/>
        <note>ligand shared between dimeric partners</note>
    </ligand>
</feature>
<feature type="binding site" evidence="1">
    <location>
        <begin position="298"/>
        <end position="304"/>
    </location>
    <ligand>
        <name>substrate</name>
    </ligand>
</feature>
<feature type="binding site" description="in other chain" evidence="1">
    <location>
        <position position="302"/>
    </location>
    <ligand>
        <name>IMP</name>
        <dbReference type="ChEBI" id="CHEBI:58053"/>
        <note>ligand shared between dimeric partners</note>
    </ligand>
</feature>
<feature type="binding site" evidence="1">
    <location>
        <position position="304"/>
    </location>
    <ligand>
        <name>GTP</name>
        <dbReference type="ChEBI" id="CHEBI:37565"/>
    </ligand>
</feature>
<feature type="binding site" evidence="1">
    <location>
        <begin position="330"/>
        <end position="332"/>
    </location>
    <ligand>
        <name>GTP</name>
        <dbReference type="ChEBI" id="CHEBI:37565"/>
    </ligand>
</feature>
<feature type="binding site" evidence="1">
    <location>
        <begin position="412"/>
        <end position="414"/>
    </location>
    <ligand>
        <name>GTP</name>
        <dbReference type="ChEBI" id="CHEBI:37565"/>
    </ligand>
</feature>
<evidence type="ECO:0000255" key="1">
    <source>
        <dbReference type="HAMAP-Rule" id="MF_00011"/>
    </source>
</evidence>
<accession>C5C8H9</accession>
<keyword id="KW-0963">Cytoplasm</keyword>
<keyword id="KW-0342">GTP-binding</keyword>
<keyword id="KW-0436">Ligase</keyword>
<keyword id="KW-0460">Magnesium</keyword>
<keyword id="KW-0479">Metal-binding</keyword>
<keyword id="KW-0547">Nucleotide-binding</keyword>
<keyword id="KW-0658">Purine biosynthesis</keyword>
<keyword id="KW-1185">Reference proteome</keyword>
<sequence>MPAIAIVGAQWGDEGKGKATDLLGGRVDYVVKPNGGNNAGHTVVVNGEKFELKLLPAGILSPNAVPVIGNGVVVNLEALFEEIDGLESRGHSCEHLKISANAHLVAPYHQTMDKVTERFLGQRAIGTTGRGIGPTYMDKVARLGIRVQDIFDESILRQKIEGALRQKNELLVKLYNRRAVTVDEIAEYFLGYADRLRPMVVDSVNLLNDALDEGKVVLMEGGQATYLDVDHGTYPFVTSSNPTAGGAAVGAGIGPTRFSRTIGIVKAYTTRVGAGPFPTELFDEMGEQLRTTGGEFGVNTGRPRRTGWYDAVMAHYAARINGFTDYFLTKLDVLTGIEKIPVCVAYEVDGVRHDRMPMTQTEFHHAKPVYELFDGWTEDISGARAFTDLPLNAQHYVEALEKLSGCRISAIGVGPGRDQVVQVRDLIQD</sequence>